<name>RF1_VIBA3</name>
<organism>
    <name type="scientific">Vibrio atlanticus (strain LGP32)</name>
    <name type="common">Vibrio splendidus (strain Mel32)</name>
    <dbReference type="NCBI Taxonomy" id="575788"/>
    <lineage>
        <taxon>Bacteria</taxon>
        <taxon>Pseudomonadati</taxon>
        <taxon>Pseudomonadota</taxon>
        <taxon>Gammaproteobacteria</taxon>
        <taxon>Vibrionales</taxon>
        <taxon>Vibrionaceae</taxon>
        <taxon>Vibrio</taxon>
    </lineage>
</organism>
<protein>
    <recommendedName>
        <fullName evidence="1">Peptide chain release factor 1</fullName>
        <shortName evidence="1">RF-1</shortName>
    </recommendedName>
</protein>
<dbReference type="EMBL" id="FM954972">
    <property type="protein sequence ID" value="CAV17730.1"/>
    <property type="molecule type" value="Genomic_DNA"/>
</dbReference>
<dbReference type="SMR" id="B7VKH3"/>
<dbReference type="STRING" id="575788.VS_0752"/>
<dbReference type="KEGG" id="vsp:VS_0752"/>
<dbReference type="eggNOG" id="COG0216">
    <property type="taxonomic scope" value="Bacteria"/>
</dbReference>
<dbReference type="HOGENOM" id="CLU_036856_0_1_6"/>
<dbReference type="Proteomes" id="UP000009100">
    <property type="component" value="Chromosome 1"/>
</dbReference>
<dbReference type="GO" id="GO:0005737">
    <property type="term" value="C:cytoplasm"/>
    <property type="evidence" value="ECO:0007669"/>
    <property type="project" value="UniProtKB-SubCell"/>
</dbReference>
<dbReference type="GO" id="GO:0016149">
    <property type="term" value="F:translation release factor activity, codon specific"/>
    <property type="evidence" value="ECO:0007669"/>
    <property type="project" value="UniProtKB-UniRule"/>
</dbReference>
<dbReference type="FunFam" id="3.30.160.20:FF:000004">
    <property type="entry name" value="Peptide chain release factor 1"/>
    <property type="match status" value="1"/>
</dbReference>
<dbReference type="FunFam" id="3.30.70.1660:FF:000002">
    <property type="entry name" value="Peptide chain release factor 1"/>
    <property type="match status" value="1"/>
</dbReference>
<dbReference type="FunFam" id="3.30.70.1660:FF:000004">
    <property type="entry name" value="Peptide chain release factor 1"/>
    <property type="match status" value="1"/>
</dbReference>
<dbReference type="Gene3D" id="3.30.160.20">
    <property type="match status" value="1"/>
</dbReference>
<dbReference type="Gene3D" id="3.30.70.1660">
    <property type="match status" value="1"/>
</dbReference>
<dbReference type="Gene3D" id="6.10.140.1950">
    <property type="match status" value="1"/>
</dbReference>
<dbReference type="HAMAP" id="MF_00093">
    <property type="entry name" value="Rel_fac_1"/>
    <property type="match status" value="1"/>
</dbReference>
<dbReference type="InterPro" id="IPR005139">
    <property type="entry name" value="PCRF"/>
</dbReference>
<dbReference type="InterPro" id="IPR000352">
    <property type="entry name" value="Pep_chain_release_fac_I"/>
</dbReference>
<dbReference type="InterPro" id="IPR045853">
    <property type="entry name" value="Pep_chain_release_fac_I_sf"/>
</dbReference>
<dbReference type="InterPro" id="IPR050057">
    <property type="entry name" value="Prokaryotic/Mito_RF"/>
</dbReference>
<dbReference type="InterPro" id="IPR004373">
    <property type="entry name" value="RF-1"/>
</dbReference>
<dbReference type="NCBIfam" id="TIGR00019">
    <property type="entry name" value="prfA"/>
    <property type="match status" value="1"/>
</dbReference>
<dbReference type="NCBIfam" id="NF001859">
    <property type="entry name" value="PRK00591.1"/>
    <property type="match status" value="1"/>
</dbReference>
<dbReference type="PANTHER" id="PTHR43804">
    <property type="entry name" value="LD18447P"/>
    <property type="match status" value="1"/>
</dbReference>
<dbReference type="PANTHER" id="PTHR43804:SF7">
    <property type="entry name" value="LD18447P"/>
    <property type="match status" value="1"/>
</dbReference>
<dbReference type="Pfam" id="PF03462">
    <property type="entry name" value="PCRF"/>
    <property type="match status" value="1"/>
</dbReference>
<dbReference type="Pfam" id="PF00472">
    <property type="entry name" value="RF-1"/>
    <property type="match status" value="1"/>
</dbReference>
<dbReference type="SMART" id="SM00937">
    <property type="entry name" value="PCRF"/>
    <property type="match status" value="1"/>
</dbReference>
<dbReference type="SUPFAM" id="SSF75620">
    <property type="entry name" value="Release factor"/>
    <property type="match status" value="1"/>
</dbReference>
<dbReference type="PROSITE" id="PS00745">
    <property type="entry name" value="RF_PROK_I"/>
    <property type="match status" value="1"/>
</dbReference>
<keyword id="KW-0963">Cytoplasm</keyword>
<keyword id="KW-0488">Methylation</keyword>
<keyword id="KW-0648">Protein biosynthesis</keyword>
<comment type="function">
    <text evidence="1">Peptide chain release factor 1 directs the termination of translation in response to the peptide chain termination codons UAG and UAA.</text>
</comment>
<comment type="subcellular location">
    <subcellularLocation>
        <location evidence="1">Cytoplasm</location>
    </subcellularLocation>
</comment>
<comment type="PTM">
    <text evidence="1">Methylated by PrmC. Methylation increases the termination efficiency of RF1.</text>
</comment>
<comment type="similarity">
    <text evidence="1">Belongs to the prokaryotic/mitochondrial release factor family.</text>
</comment>
<proteinExistence type="inferred from homology"/>
<reference key="1">
    <citation type="submission" date="2009-02" db="EMBL/GenBank/DDBJ databases">
        <title>Vibrio splendidus str. LGP32 complete genome.</title>
        <authorList>
            <person name="Mazel D."/>
            <person name="Le Roux F."/>
        </authorList>
    </citation>
    <scope>NUCLEOTIDE SEQUENCE [LARGE SCALE GENOMIC DNA]</scope>
    <source>
        <strain>LGP32</strain>
    </source>
</reference>
<evidence type="ECO:0000255" key="1">
    <source>
        <dbReference type="HAMAP-Rule" id="MF_00093"/>
    </source>
</evidence>
<accession>B7VKH3</accession>
<sequence length="362" mass="40364">MKASILIKLETLVERYEEVQHLLGDPDVLGNQDKFRALSKEYSQLEEVTGCFKSYQQAQEDLEAAEEMANEDDAEMREMAQEEIKDAKANIERLTDELQILLIPKDPNDERNCFLEIRAGAGGDEAGIFAGNLFRMYSKFAEKKGWRVEVMSSNVSEQGGFKEMIAKISGDAVYGTMKFESGGHRVQRVPETESQGRVHTSACTVAVMPEIPEADLPEIKAGDLKIDTFRASGAGGQHVNTTDSAIRITHLPTGTVVECQDERSQHKNKAKAMAVLAARIVQAEEERRAAAISDTRRNLLGSGDRSDRIRTYNYPQGRVSDHRINLTIYRLNEVLEGDMQSLLDPVLQEHQADQLAALAEHN</sequence>
<gene>
    <name evidence="1" type="primary">prfA</name>
    <name type="ordered locus">VS_0752</name>
</gene>
<feature type="chain" id="PRO_1000193514" description="Peptide chain release factor 1">
    <location>
        <begin position="1"/>
        <end position="362"/>
    </location>
</feature>
<feature type="modified residue" description="N5-methylglutamine" evidence="1">
    <location>
        <position position="237"/>
    </location>
</feature>